<proteinExistence type="evidence at protein level"/>
<gene>
    <name type="ordered locus">Mmwyl1_0037</name>
</gene>
<feature type="chain" id="PRO_0000429888" description="D-galactonate dehydratase family member Mmwyl1_0037">
    <location>
        <begin position="1"/>
        <end position="403"/>
    </location>
</feature>
<feature type="active site" description="Proton donor/acceptor" evidence="1">
    <location>
        <position position="159"/>
    </location>
</feature>
<feature type="active site" description="Proton donor/acceptor" evidence="1">
    <location>
        <position position="213"/>
    </location>
</feature>
<feature type="binding site" evidence="1">
    <location>
        <position position="37"/>
    </location>
    <ligand>
        <name>substrate</name>
    </ligand>
</feature>
<feature type="binding site" evidence="1">
    <location>
        <position position="122"/>
    </location>
    <ligand>
        <name>substrate</name>
    </ligand>
</feature>
<feature type="binding site" evidence="1">
    <location>
        <position position="211"/>
    </location>
    <ligand>
        <name>Mg(2+)</name>
        <dbReference type="ChEBI" id="CHEBI:18420"/>
    </ligand>
</feature>
<feature type="binding site" evidence="1">
    <location>
        <position position="237"/>
    </location>
    <ligand>
        <name>Mg(2+)</name>
        <dbReference type="ChEBI" id="CHEBI:18420"/>
    </ligand>
</feature>
<feature type="binding site" evidence="1">
    <location>
        <position position="263"/>
    </location>
    <ligand>
        <name>Mg(2+)</name>
        <dbReference type="ChEBI" id="CHEBI:18420"/>
    </ligand>
</feature>
<feature type="binding site" evidence="1">
    <location>
        <position position="263"/>
    </location>
    <ligand>
        <name>substrate</name>
    </ligand>
</feature>
<feature type="binding site" evidence="1">
    <location>
        <position position="284"/>
    </location>
    <ligand>
        <name>substrate</name>
    </ligand>
</feature>
<feature type="binding site" evidence="1">
    <location>
        <position position="313"/>
    </location>
    <ligand>
        <name>substrate</name>
    </ligand>
</feature>
<feature type="binding site" evidence="1">
    <location>
        <position position="317"/>
    </location>
    <ligand>
        <name>substrate</name>
    </ligand>
</feature>
<feature type="binding site" evidence="1">
    <location>
        <position position="340"/>
    </location>
    <ligand>
        <name>substrate</name>
    </ligand>
</feature>
<reference key="1">
    <citation type="submission" date="2007-06" db="EMBL/GenBank/DDBJ databases">
        <title>Complete sequence of Marinomonas sp. MWYL1.</title>
        <authorList>
            <consortium name="US DOE Joint Genome Institute"/>
            <person name="Copeland A."/>
            <person name="Lucas S."/>
            <person name="Lapidus A."/>
            <person name="Barry K."/>
            <person name="Glavina del Rio T."/>
            <person name="Dalin E."/>
            <person name="Tice H."/>
            <person name="Pitluck S."/>
            <person name="Kiss H."/>
            <person name="Brettin T."/>
            <person name="Bruce D."/>
            <person name="Detter J.C."/>
            <person name="Han C."/>
            <person name="Schmutz J."/>
            <person name="Larimer F."/>
            <person name="Land M."/>
            <person name="Hauser L."/>
            <person name="Kyrpides N."/>
            <person name="Kim E."/>
            <person name="Johnston A.W.B."/>
            <person name="Todd J.D."/>
            <person name="Rogers R."/>
            <person name="Wexler M."/>
            <person name="Bond P.L."/>
            <person name="Li Y."/>
            <person name="Richardson P."/>
        </authorList>
    </citation>
    <scope>NUCLEOTIDE SEQUENCE [LARGE SCALE GENOMIC DNA]</scope>
    <source>
        <strain>MWYL1</strain>
    </source>
</reference>
<reference key="2">
    <citation type="journal article" date="2014" name="Biochemistry">
        <title>Discovery of function in the enolase superfamily: D-mannonate and D-gluconate dehydratases in the D-mannonate dehydratase subgroup.</title>
        <authorList>
            <person name="Wichelecki D.J."/>
            <person name="Balthazor B.M."/>
            <person name="Chau A.C."/>
            <person name="Vetting M.W."/>
            <person name="Fedorov A.A."/>
            <person name="Fedorov E.V."/>
            <person name="Lukk T."/>
            <person name="Patskovsky Y.V."/>
            <person name="Stead M.B."/>
            <person name="Hillerich B.S."/>
            <person name="Seidel R.D."/>
            <person name="Almo S.C."/>
            <person name="Gerlt J.A."/>
        </authorList>
    </citation>
    <scope>FUNCTION</scope>
    <scope>CATALYTIC ACTIVITY</scope>
    <scope>COFACTOR</scope>
    <scope>BIOPHYSICOCHEMICAL PROPERTIES</scope>
</reference>
<name>MAND_MARMS</name>
<evidence type="ECO:0000250" key="1"/>
<evidence type="ECO:0000269" key="2">
    <source>
    </source>
</evidence>
<evidence type="ECO:0000305" key="3"/>
<accession>A6VRA1</accession>
<organism>
    <name type="scientific">Marinomonas sp. (strain MWYL1)</name>
    <dbReference type="NCBI Taxonomy" id="400668"/>
    <lineage>
        <taxon>Bacteria</taxon>
        <taxon>Pseudomonadati</taxon>
        <taxon>Pseudomonadota</taxon>
        <taxon>Gammaproteobacteria</taxon>
        <taxon>Oceanospirillales</taxon>
        <taxon>Oceanospirillaceae</taxon>
        <taxon>Marinomonas</taxon>
    </lineage>
</organism>
<keyword id="KW-0456">Lyase</keyword>
<keyword id="KW-0460">Magnesium</keyword>
<keyword id="KW-0479">Metal-binding</keyword>
<dbReference type="EC" id="4.2.1.-"/>
<dbReference type="EC" id="4.2.1.8"/>
<dbReference type="EMBL" id="CP000749">
    <property type="protein sequence ID" value="ABR68980.1"/>
    <property type="molecule type" value="Genomic_DNA"/>
</dbReference>
<dbReference type="SMR" id="A6VRA1"/>
<dbReference type="STRING" id="400668.Mmwyl1_0037"/>
<dbReference type="KEGG" id="mmw:Mmwyl1_0037"/>
<dbReference type="eggNOG" id="COG4948">
    <property type="taxonomic scope" value="Bacteria"/>
</dbReference>
<dbReference type="HOGENOM" id="CLU_030273_6_1_6"/>
<dbReference type="OrthoDB" id="9782675at2"/>
<dbReference type="GO" id="GO:0000287">
    <property type="term" value="F:magnesium ion binding"/>
    <property type="evidence" value="ECO:0000314"/>
    <property type="project" value="UniProtKB"/>
</dbReference>
<dbReference type="GO" id="GO:0008927">
    <property type="term" value="F:mannonate dehydratase activity"/>
    <property type="evidence" value="ECO:0000314"/>
    <property type="project" value="UniProtKB"/>
</dbReference>
<dbReference type="GO" id="GO:0009063">
    <property type="term" value="P:amino acid catabolic process"/>
    <property type="evidence" value="ECO:0007669"/>
    <property type="project" value="InterPro"/>
</dbReference>
<dbReference type="GO" id="GO:0016052">
    <property type="term" value="P:carbohydrate catabolic process"/>
    <property type="evidence" value="ECO:0000314"/>
    <property type="project" value="UniProtKB"/>
</dbReference>
<dbReference type="FunFam" id="3.20.20.120:FF:000004">
    <property type="entry name" value="D-galactonate dehydratase family protein"/>
    <property type="match status" value="1"/>
</dbReference>
<dbReference type="FunFam" id="3.30.390.10:FF:000002">
    <property type="entry name" value="D-galactonate dehydratase family protein"/>
    <property type="match status" value="1"/>
</dbReference>
<dbReference type="Gene3D" id="3.20.20.120">
    <property type="entry name" value="Enolase-like C-terminal domain"/>
    <property type="match status" value="1"/>
</dbReference>
<dbReference type="Gene3D" id="3.30.390.10">
    <property type="entry name" value="Enolase-like, N-terminal domain"/>
    <property type="match status" value="1"/>
</dbReference>
<dbReference type="InterPro" id="IPR034589">
    <property type="entry name" value="D-mannonate_dehydratase-like"/>
</dbReference>
<dbReference type="InterPro" id="IPR053379">
    <property type="entry name" value="D-mannonate_dehydratase_GalD"/>
</dbReference>
<dbReference type="InterPro" id="IPR034593">
    <property type="entry name" value="DgoD-like"/>
</dbReference>
<dbReference type="InterPro" id="IPR036849">
    <property type="entry name" value="Enolase-like_C_sf"/>
</dbReference>
<dbReference type="InterPro" id="IPR029017">
    <property type="entry name" value="Enolase-like_N"/>
</dbReference>
<dbReference type="InterPro" id="IPR029065">
    <property type="entry name" value="Enolase_C-like"/>
</dbReference>
<dbReference type="InterPro" id="IPR018110">
    <property type="entry name" value="Mandel_Rmase/mucon_lact_enz_CS"/>
</dbReference>
<dbReference type="InterPro" id="IPR013342">
    <property type="entry name" value="Mandelate_racemase_C"/>
</dbReference>
<dbReference type="InterPro" id="IPR013341">
    <property type="entry name" value="Mandelate_racemase_N_dom"/>
</dbReference>
<dbReference type="NCBIfam" id="NF043051">
    <property type="entry name" value="ManoateDhtManD"/>
    <property type="match status" value="1"/>
</dbReference>
<dbReference type="NCBIfam" id="NF011654">
    <property type="entry name" value="PRK15072.1"/>
    <property type="match status" value="1"/>
</dbReference>
<dbReference type="PANTHER" id="PTHR48080">
    <property type="entry name" value="D-GALACTONATE DEHYDRATASE-RELATED"/>
    <property type="match status" value="1"/>
</dbReference>
<dbReference type="PANTHER" id="PTHR48080:SF6">
    <property type="entry name" value="STARVATION-SENSING PROTEIN RSPA"/>
    <property type="match status" value="1"/>
</dbReference>
<dbReference type="Pfam" id="PF13378">
    <property type="entry name" value="MR_MLE_C"/>
    <property type="match status" value="1"/>
</dbReference>
<dbReference type="Pfam" id="PF02746">
    <property type="entry name" value="MR_MLE_N"/>
    <property type="match status" value="1"/>
</dbReference>
<dbReference type="SFLD" id="SFLDS00001">
    <property type="entry name" value="Enolase"/>
    <property type="match status" value="1"/>
</dbReference>
<dbReference type="SFLD" id="SFLDG00033">
    <property type="entry name" value="mannonate_dehydratase"/>
    <property type="match status" value="1"/>
</dbReference>
<dbReference type="SMART" id="SM00922">
    <property type="entry name" value="MR_MLE"/>
    <property type="match status" value="1"/>
</dbReference>
<dbReference type="SUPFAM" id="SSF51604">
    <property type="entry name" value="Enolase C-terminal domain-like"/>
    <property type="match status" value="1"/>
</dbReference>
<dbReference type="SUPFAM" id="SSF54826">
    <property type="entry name" value="Enolase N-terminal domain-like"/>
    <property type="match status" value="1"/>
</dbReference>
<dbReference type="PROSITE" id="PS00908">
    <property type="entry name" value="MR_MLE_1"/>
    <property type="match status" value="1"/>
</dbReference>
<sequence length="403" mass="45120">MKIRSAKVIVTCPGRNLVTLKIETDEGVYGIGDATLNGREKSVVSYLEDHVIPTLIGKDPQRVEDIWQYLYRGAYWRRGPVGMTAIAAVDVALWDIKAKLAGMPLYQLLGGKSREKVMVYGHATGLDIESCLEEVRKHVELGYKAVRVQCGIPGIPTTYGVSKEAGKPYEPADSALPAEHVWSTEKYLNNVPELFAAVRKEFGEDLHILHDVHHRLTPIQAARLGKEVEKFHLFWLEDCTAVENQSSYELIRKHTTTPLAIGEVFNSLSDCQELIQNQLIDYIRATITHAGGITNIRRIADFASVFHVKTGFHGATDLSPVCMGAALHFDTWVPNFGIQEHMPHTKETDLVFPHAYEFNDGFFTPGDVPGHGVDIDEEIAAKYPYKPAYLPVNRLEDGTLWNW</sequence>
<comment type="function">
    <text evidence="2">Has low D-mannonate dehydratase activity (in vitro), suggesting that this is not a physiological substrate and that it has no significant role in D-mannonate degradation in vivo. Has no detectable activity with a panel of 70 other acid sugars (in vitro).</text>
</comment>
<comment type="catalytic activity">
    <reaction evidence="2">
        <text>D-mannonate = 2-dehydro-3-deoxy-D-gluconate + H2O</text>
        <dbReference type="Rhea" id="RHEA:20097"/>
        <dbReference type="ChEBI" id="CHEBI:15377"/>
        <dbReference type="ChEBI" id="CHEBI:17767"/>
        <dbReference type="ChEBI" id="CHEBI:57990"/>
        <dbReference type="EC" id="4.2.1.8"/>
    </reaction>
</comment>
<comment type="cofactor">
    <cofactor evidence="2">
        <name>Mg(2+)</name>
        <dbReference type="ChEBI" id="CHEBI:18420"/>
    </cofactor>
    <text evidence="2">Binds 1 Mg(2+) ion per subunit.</text>
</comment>
<comment type="biophysicochemical properties">
    <kinetics>
        <text evidence="2">kcat is 0.02 sec(-1) with D-mannonate.</text>
    </kinetics>
</comment>
<comment type="similarity">
    <text evidence="3">Belongs to the mandelate racemase/muconate lactonizing enzyme family. GalD subfamily.</text>
</comment>
<protein>
    <recommendedName>
        <fullName>D-galactonate dehydratase family member Mmwyl1_0037</fullName>
        <ecNumber>4.2.1.-</ecNumber>
    </recommendedName>
    <alternativeName>
        <fullName>D-mannonate dehydratase</fullName>
        <ecNumber>4.2.1.8</ecNumber>
    </alternativeName>
</protein>